<organism>
    <name type="scientific">Dehalococcoides mccartyi (strain CBDB1)</name>
    <dbReference type="NCBI Taxonomy" id="255470"/>
    <lineage>
        <taxon>Bacteria</taxon>
        <taxon>Bacillati</taxon>
        <taxon>Chloroflexota</taxon>
        <taxon>Dehalococcoidia</taxon>
        <taxon>Dehalococcoidales</taxon>
        <taxon>Dehalococcoidaceae</taxon>
        <taxon>Dehalococcoides</taxon>
    </lineage>
</organism>
<protein>
    <recommendedName>
        <fullName evidence="1">Large ribosomal subunit protein bL21</fullName>
    </recommendedName>
    <alternativeName>
        <fullName evidence="3">50S ribosomal protein L21</fullName>
    </alternativeName>
</protein>
<proteinExistence type="inferred from homology"/>
<gene>
    <name evidence="1" type="primary">rplU</name>
    <name type="ordered locus">cbdbA1270</name>
</gene>
<evidence type="ECO:0000255" key="1">
    <source>
        <dbReference type="HAMAP-Rule" id="MF_01363"/>
    </source>
</evidence>
<evidence type="ECO:0000256" key="2">
    <source>
        <dbReference type="SAM" id="MobiDB-lite"/>
    </source>
</evidence>
<evidence type="ECO:0000305" key="3"/>
<reference key="1">
    <citation type="journal article" date="2005" name="Nat. Biotechnol.">
        <title>Genome sequence of the chlorinated compound-respiring bacterium Dehalococcoides species strain CBDB1.</title>
        <authorList>
            <person name="Kube M."/>
            <person name="Beck A."/>
            <person name="Zinder S.H."/>
            <person name="Kuhl H."/>
            <person name="Reinhardt R."/>
            <person name="Adrian L."/>
        </authorList>
    </citation>
    <scope>NUCLEOTIDE SEQUENCE [LARGE SCALE GENOMIC DNA]</scope>
    <source>
        <strain>CBDB1</strain>
    </source>
</reference>
<feature type="chain" id="PRO_0000270660" description="Large ribosomal subunit protein bL21">
    <location>
        <begin position="1"/>
        <end position="132"/>
    </location>
</feature>
<feature type="region of interest" description="Disordered" evidence="2">
    <location>
        <begin position="111"/>
        <end position="132"/>
    </location>
</feature>
<accession>Q3ZYN5</accession>
<name>RL21_DEHMC</name>
<dbReference type="EMBL" id="AJ965256">
    <property type="protein sequence ID" value="CAI83332.1"/>
    <property type="molecule type" value="Genomic_DNA"/>
</dbReference>
<dbReference type="SMR" id="Q3ZYN5"/>
<dbReference type="KEGG" id="deh:cbdbA1270"/>
<dbReference type="HOGENOM" id="CLU_061463_1_1_0"/>
<dbReference type="Proteomes" id="UP000000433">
    <property type="component" value="Chromosome"/>
</dbReference>
<dbReference type="GO" id="GO:0005737">
    <property type="term" value="C:cytoplasm"/>
    <property type="evidence" value="ECO:0007669"/>
    <property type="project" value="UniProtKB-ARBA"/>
</dbReference>
<dbReference type="GO" id="GO:1990904">
    <property type="term" value="C:ribonucleoprotein complex"/>
    <property type="evidence" value="ECO:0007669"/>
    <property type="project" value="UniProtKB-KW"/>
</dbReference>
<dbReference type="GO" id="GO:0005840">
    <property type="term" value="C:ribosome"/>
    <property type="evidence" value="ECO:0007669"/>
    <property type="project" value="UniProtKB-KW"/>
</dbReference>
<dbReference type="GO" id="GO:0019843">
    <property type="term" value="F:rRNA binding"/>
    <property type="evidence" value="ECO:0007669"/>
    <property type="project" value="UniProtKB-UniRule"/>
</dbReference>
<dbReference type="GO" id="GO:0003735">
    <property type="term" value="F:structural constituent of ribosome"/>
    <property type="evidence" value="ECO:0007669"/>
    <property type="project" value="InterPro"/>
</dbReference>
<dbReference type="GO" id="GO:0006412">
    <property type="term" value="P:translation"/>
    <property type="evidence" value="ECO:0007669"/>
    <property type="project" value="UniProtKB-UniRule"/>
</dbReference>
<dbReference type="HAMAP" id="MF_01363">
    <property type="entry name" value="Ribosomal_bL21"/>
    <property type="match status" value="1"/>
</dbReference>
<dbReference type="InterPro" id="IPR028909">
    <property type="entry name" value="bL21-like"/>
</dbReference>
<dbReference type="InterPro" id="IPR036164">
    <property type="entry name" value="bL21-like_sf"/>
</dbReference>
<dbReference type="InterPro" id="IPR001787">
    <property type="entry name" value="Ribosomal_bL21"/>
</dbReference>
<dbReference type="InterPro" id="IPR018258">
    <property type="entry name" value="Ribosomal_bL21_CS"/>
</dbReference>
<dbReference type="NCBIfam" id="TIGR00061">
    <property type="entry name" value="L21"/>
    <property type="match status" value="1"/>
</dbReference>
<dbReference type="PANTHER" id="PTHR21349">
    <property type="entry name" value="50S RIBOSOMAL PROTEIN L21"/>
    <property type="match status" value="1"/>
</dbReference>
<dbReference type="PANTHER" id="PTHR21349:SF0">
    <property type="entry name" value="LARGE RIBOSOMAL SUBUNIT PROTEIN BL21M"/>
    <property type="match status" value="1"/>
</dbReference>
<dbReference type="Pfam" id="PF00829">
    <property type="entry name" value="Ribosomal_L21p"/>
    <property type="match status" value="1"/>
</dbReference>
<dbReference type="SUPFAM" id="SSF141091">
    <property type="entry name" value="L21p-like"/>
    <property type="match status" value="1"/>
</dbReference>
<dbReference type="PROSITE" id="PS01169">
    <property type="entry name" value="RIBOSOMAL_L21"/>
    <property type="match status" value="1"/>
</dbReference>
<sequence>MGGVNIYAIIESGGKQYKVTPGQLVEVDLLDLAEGDSIELDKVLMLNDGETVTIGSPTISGAKVTATVAGHIKGDKVFAYRFKAKTRNHKKMGHRQLYTVLTIGEILTGGAAEKPARKPRAKKTNEVTTDGA</sequence>
<comment type="function">
    <text evidence="1">This protein binds to 23S rRNA in the presence of protein L20.</text>
</comment>
<comment type="subunit">
    <text evidence="1">Part of the 50S ribosomal subunit. Contacts protein L20.</text>
</comment>
<comment type="similarity">
    <text evidence="1">Belongs to the bacterial ribosomal protein bL21 family.</text>
</comment>
<keyword id="KW-0687">Ribonucleoprotein</keyword>
<keyword id="KW-0689">Ribosomal protein</keyword>
<keyword id="KW-0694">RNA-binding</keyword>
<keyword id="KW-0699">rRNA-binding</keyword>